<evidence type="ECO:0000255" key="1">
    <source>
        <dbReference type="HAMAP-Rule" id="MF_00508"/>
    </source>
</evidence>
<evidence type="ECO:0000305" key="2"/>
<organism>
    <name type="scientific">Synechococcus sp. (strain CC9311)</name>
    <dbReference type="NCBI Taxonomy" id="64471"/>
    <lineage>
        <taxon>Bacteria</taxon>
        <taxon>Bacillati</taxon>
        <taxon>Cyanobacteriota</taxon>
        <taxon>Cyanophyceae</taxon>
        <taxon>Synechococcales</taxon>
        <taxon>Synechococcaceae</taxon>
        <taxon>Synechococcus</taxon>
    </lineage>
</organism>
<accession>Q0ID60</accession>
<protein>
    <recommendedName>
        <fullName evidence="1">Small ribosomal subunit protein uS10</fullName>
    </recommendedName>
    <alternativeName>
        <fullName evidence="2">30S ribosomal protein S10</fullName>
    </alternativeName>
</protein>
<reference key="1">
    <citation type="journal article" date="2006" name="Proc. Natl. Acad. Sci. U.S.A.">
        <title>Genome sequence of Synechococcus CC9311: insights into adaptation to a coastal environment.</title>
        <authorList>
            <person name="Palenik B."/>
            <person name="Ren Q."/>
            <person name="Dupont C.L."/>
            <person name="Myers G.S."/>
            <person name="Heidelberg J.F."/>
            <person name="Badger J.H."/>
            <person name="Madupu R."/>
            <person name="Nelson W.C."/>
            <person name="Brinkac L.M."/>
            <person name="Dodson R.J."/>
            <person name="Durkin A.S."/>
            <person name="Daugherty S.C."/>
            <person name="Sullivan S.A."/>
            <person name="Khouri H."/>
            <person name="Mohamoud Y."/>
            <person name="Halpin R."/>
            <person name="Paulsen I.T."/>
        </authorList>
    </citation>
    <scope>NUCLEOTIDE SEQUENCE [LARGE SCALE GENOMIC DNA]</scope>
    <source>
        <strain>CC9311</strain>
    </source>
</reference>
<feature type="chain" id="PRO_1000015129" description="Small ribosomal subunit protein uS10">
    <location>
        <begin position="1"/>
        <end position="106"/>
    </location>
</feature>
<proteinExistence type="inferred from homology"/>
<comment type="function">
    <text evidence="1">Involved in the binding of tRNA to the ribosomes.</text>
</comment>
<comment type="subunit">
    <text evidence="1">Part of the 30S ribosomal subunit.</text>
</comment>
<comment type="similarity">
    <text evidence="1">Belongs to the universal ribosomal protein uS10 family.</text>
</comment>
<name>RS10_SYNS3</name>
<gene>
    <name evidence="1" type="primary">rpsJ</name>
    <name evidence="1" type="synonym">rps10</name>
    <name type="ordered locus">sync_0380</name>
</gene>
<keyword id="KW-1185">Reference proteome</keyword>
<keyword id="KW-0687">Ribonucleoprotein</keyword>
<keyword id="KW-0689">Ribosomal protein</keyword>
<dbReference type="EMBL" id="CP000435">
    <property type="protein sequence ID" value="ABI46021.1"/>
    <property type="molecule type" value="Genomic_DNA"/>
</dbReference>
<dbReference type="RefSeq" id="WP_006042265.1">
    <property type="nucleotide sequence ID" value="NC_008319.1"/>
</dbReference>
<dbReference type="SMR" id="Q0ID60"/>
<dbReference type="STRING" id="64471.sync_0380"/>
<dbReference type="KEGG" id="syg:sync_0380"/>
<dbReference type="eggNOG" id="COG0051">
    <property type="taxonomic scope" value="Bacteria"/>
</dbReference>
<dbReference type="HOGENOM" id="CLU_122625_1_3_3"/>
<dbReference type="OrthoDB" id="9804464at2"/>
<dbReference type="Proteomes" id="UP000001961">
    <property type="component" value="Chromosome"/>
</dbReference>
<dbReference type="GO" id="GO:1990904">
    <property type="term" value="C:ribonucleoprotein complex"/>
    <property type="evidence" value="ECO:0007669"/>
    <property type="project" value="UniProtKB-KW"/>
</dbReference>
<dbReference type="GO" id="GO:0005840">
    <property type="term" value="C:ribosome"/>
    <property type="evidence" value="ECO:0007669"/>
    <property type="project" value="UniProtKB-KW"/>
</dbReference>
<dbReference type="GO" id="GO:0003735">
    <property type="term" value="F:structural constituent of ribosome"/>
    <property type="evidence" value="ECO:0007669"/>
    <property type="project" value="InterPro"/>
</dbReference>
<dbReference type="GO" id="GO:0000049">
    <property type="term" value="F:tRNA binding"/>
    <property type="evidence" value="ECO:0007669"/>
    <property type="project" value="UniProtKB-UniRule"/>
</dbReference>
<dbReference type="GO" id="GO:0006412">
    <property type="term" value="P:translation"/>
    <property type="evidence" value="ECO:0007669"/>
    <property type="project" value="UniProtKB-UniRule"/>
</dbReference>
<dbReference type="FunFam" id="3.30.70.600:FF:000001">
    <property type="entry name" value="30S ribosomal protein S10"/>
    <property type="match status" value="1"/>
</dbReference>
<dbReference type="Gene3D" id="3.30.70.600">
    <property type="entry name" value="Ribosomal protein S10 domain"/>
    <property type="match status" value="1"/>
</dbReference>
<dbReference type="HAMAP" id="MF_00508">
    <property type="entry name" value="Ribosomal_uS10"/>
    <property type="match status" value="1"/>
</dbReference>
<dbReference type="InterPro" id="IPR001848">
    <property type="entry name" value="Ribosomal_uS10"/>
</dbReference>
<dbReference type="InterPro" id="IPR027486">
    <property type="entry name" value="Ribosomal_uS10_dom"/>
</dbReference>
<dbReference type="InterPro" id="IPR036838">
    <property type="entry name" value="Ribosomal_uS10_dom_sf"/>
</dbReference>
<dbReference type="NCBIfam" id="NF001861">
    <property type="entry name" value="PRK00596.1"/>
    <property type="match status" value="1"/>
</dbReference>
<dbReference type="NCBIfam" id="TIGR01049">
    <property type="entry name" value="rpsJ_bact"/>
    <property type="match status" value="1"/>
</dbReference>
<dbReference type="PANTHER" id="PTHR11700">
    <property type="entry name" value="30S RIBOSOMAL PROTEIN S10 FAMILY MEMBER"/>
    <property type="match status" value="1"/>
</dbReference>
<dbReference type="Pfam" id="PF00338">
    <property type="entry name" value="Ribosomal_S10"/>
    <property type="match status" value="1"/>
</dbReference>
<dbReference type="PRINTS" id="PR00971">
    <property type="entry name" value="RIBOSOMALS10"/>
</dbReference>
<dbReference type="SMART" id="SM01403">
    <property type="entry name" value="Ribosomal_S10"/>
    <property type="match status" value="1"/>
</dbReference>
<dbReference type="SUPFAM" id="SSF54999">
    <property type="entry name" value="Ribosomal protein S10"/>
    <property type="match status" value="1"/>
</dbReference>
<sequence length="106" mass="12044">MSTAIAQQKIRIRLKAFDRRMLDLSCDKIIETADNTAATAIGPIPLPTKRKIYCVLRSPHVDKDSREHFETRTHRRIIDIYSPSAKTIDALMKLDLPSGVDIEVKL</sequence>